<comment type="catalytic activity">
    <reaction evidence="1">
        <text>tRNA(Gly) + glycine + ATP = glycyl-tRNA(Gly) + AMP + diphosphate</text>
        <dbReference type="Rhea" id="RHEA:16013"/>
        <dbReference type="Rhea" id="RHEA-COMP:9664"/>
        <dbReference type="Rhea" id="RHEA-COMP:9683"/>
        <dbReference type="ChEBI" id="CHEBI:30616"/>
        <dbReference type="ChEBI" id="CHEBI:33019"/>
        <dbReference type="ChEBI" id="CHEBI:57305"/>
        <dbReference type="ChEBI" id="CHEBI:78442"/>
        <dbReference type="ChEBI" id="CHEBI:78522"/>
        <dbReference type="ChEBI" id="CHEBI:456215"/>
        <dbReference type="EC" id="6.1.1.14"/>
    </reaction>
</comment>
<comment type="subunit">
    <text evidence="1">Tetramer of two alpha and two beta subunits.</text>
</comment>
<comment type="subcellular location">
    <subcellularLocation>
        <location evidence="1">Cytoplasm</location>
    </subcellularLocation>
</comment>
<comment type="similarity">
    <text evidence="1">Belongs to the class-II aminoacyl-tRNA synthetase family.</text>
</comment>
<dbReference type="EC" id="6.1.1.14" evidence="1"/>
<dbReference type="EMBL" id="CP000393">
    <property type="protein sequence ID" value="ABG53468.1"/>
    <property type="molecule type" value="Genomic_DNA"/>
</dbReference>
<dbReference type="RefSeq" id="WP_011613790.1">
    <property type="nucleotide sequence ID" value="NC_008312.1"/>
</dbReference>
<dbReference type="SMR" id="Q10WA6"/>
<dbReference type="STRING" id="203124.Tery_4481"/>
<dbReference type="KEGG" id="ter:Tery_4481"/>
<dbReference type="eggNOG" id="COG0751">
    <property type="taxonomic scope" value="Bacteria"/>
</dbReference>
<dbReference type="HOGENOM" id="CLU_007220_2_2_3"/>
<dbReference type="GO" id="GO:0005829">
    <property type="term" value="C:cytosol"/>
    <property type="evidence" value="ECO:0007669"/>
    <property type="project" value="TreeGrafter"/>
</dbReference>
<dbReference type="GO" id="GO:0004814">
    <property type="term" value="F:arginine-tRNA ligase activity"/>
    <property type="evidence" value="ECO:0007669"/>
    <property type="project" value="InterPro"/>
</dbReference>
<dbReference type="GO" id="GO:0005524">
    <property type="term" value="F:ATP binding"/>
    <property type="evidence" value="ECO:0007669"/>
    <property type="project" value="UniProtKB-UniRule"/>
</dbReference>
<dbReference type="GO" id="GO:0004820">
    <property type="term" value="F:glycine-tRNA ligase activity"/>
    <property type="evidence" value="ECO:0007669"/>
    <property type="project" value="UniProtKB-UniRule"/>
</dbReference>
<dbReference type="GO" id="GO:0006420">
    <property type="term" value="P:arginyl-tRNA aminoacylation"/>
    <property type="evidence" value="ECO:0007669"/>
    <property type="project" value="InterPro"/>
</dbReference>
<dbReference type="GO" id="GO:0006426">
    <property type="term" value="P:glycyl-tRNA aminoacylation"/>
    <property type="evidence" value="ECO:0007669"/>
    <property type="project" value="UniProtKB-UniRule"/>
</dbReference>
<dbReference type="HAMAP" id="MF_00255">
    <property type="entry name" value="Gly_tRNA_synth_beta"/>
    <property type="match status" value="1"/>
</dbReference>
<dbReference type="InterPro" id="IPR008909">
    <property type="entry name" value="DALR_anticod-bd"/>
</dbReference>
<dbReference type="InterPro" id="IPR015944">
    <property type="entry name" value="Gly-tRNA-synth_bsu"/>
</dbReference>
<dbReference type="InterPro" id="IPR006194">
    <property type="entry name" value="Gly-tRNA-synth_heterodimer"/>
</dbReference>
<dbReference type="NCBIfam" id="TIGR00211">
    <property type="entry name" value="glyS"/>
    <property type="match status" value="1"/>
</dbReference>
<dbReference type="PANTHER" id="PTHR30075:SF2">
    <property type="entry name" value="GLYCINE--TRNA LIGASE, CHLOROPLASTIC_MITOCHONDRIAL 2"/>
    <property type="match status" value="1"/>
</dbReference>
<dbReference type="PANTHER" id="PTHR30075">
    <property type="entry name" value="GLYCYL-TRNA SYNTHETASE"/>
    <property type="match status" value="1"/>
</dbReference>
<dbReference type="Pfam" id="PF05746">
    <property type="entry name" value="DALR_1"/>
    <property type="match status" value="1"/>
</dbReference>
<dbReference type="Pfam" id="PF02092">
    <property type="entry name" value="tRNA_synt_2f"/>
    <property type="match status" value="1"/>
</dbReference>
<dbReference type="PRINTS" id="PR01045">
    <property type="entry name" value="TRNASYNTHGB"/>
</dbReference>
<dbReference type="SUPFAM" id="SSF109604">
    <property type="entry name" value="HD-domain/PDEase-like"/>
    <property type="match status" value="1"/>
</dbReference>
<dbReference type="PROSITE" id="PS50861">
    <property type="entry name" value="AA_TRNA_LIGASE_II_GLYAB"/>
    <property type="match status" value="1"/>
</dbReference>
<feature type="chain" id="PRO_1000101368" description="Glycine--tRNA ligase beta subunit">
    <location>
        <begin position="1"/>
        <end position="719"/>
    </location>
</feature>
<feature type="region of interest" description="Disordered" evidence="2">
    <location>
        <begin position="65"/>
        <end position="84"/>
    </location>
</feature>
<name>SYGB_TRIEI</name>
<organism>
    <name type="scientific">Trichodesmium erythraeum (strain IMS101)</name>
    <dbReference type="NCBI Taxonomy" id="203124"/>
    <lineage>
        <taxon>Bacteria</taxon>
        <taxon>Bacillati</taxon>
        <taxon>Cyanobacteriota</taxon>
        <taxon>Cyanophyceae</taxon>
        <taxon>Oscillatoriophycideae</taxon>
        <taxon>Oscillatoriales</taxon>
        <taxon>Microcoleaceae</taxon>
        <taxon>Trichodesmium</taxon>
    </lineage>
</organism>
<accession>Q10WA6</accession>
<sequence>MIVTFLLEIGTEELPANFVYEAIQQWQELIPMTLKEAFLTNDSVNVYATPRRLAVVIDALPTKQPDREEEIKGPPAKAAFKDGKPTKAAEGFSKKQGVQLNDLQICTTEKGDFVFVNKKIQGKPTAAILTELIPKWIDKLEGKRFMRWADGELKFPRPIRWLVALLDDEILPINLDNGSQKITSDRFSYGHRVLHPKLIEISQAKNYVEVLKKAYIEVDYKQRKSKIEQQIKTAAEEIKGKAEISEELLAEVTNLVEWPTVVIGKFDEEFLILPGEVTTTVMETHQRYFPVFKSTKTFKDMELLPYFITISNGDPEKSEIIAIGNERVIKARLADGQFFYKTDLAKPLESYLPELETVTFQAKLGSMREKVKRIVSIAKLIAGQLQITQEESKNIERAALLCKADLVTQMVYEFPELQGVMGEKYARAAGETEAVATAIFEHYLPRGAGDILPKTISGQVISLADRLDTLVSIFGLGMLPTGSADPFALRRAANGVVNISWSANLPLNLHQLLEEIATNFFKTYSQTNSDLLAQLSNFLLQRIKTILLEEKNIDYDLVNAVLGDNDAEYKERGLKDLLDVRNRAIFLQNIRQNGMLGKIYETINRSTRLAAQGELDKIQLKPLKVIDSKLFKSESELAFYNALVELVPQTEISQKTRNYQQLVDALLKIAPTVSNFFDGPDSVLVIDPDPKIKKNRLNLLGLLRNNARVLADFGQIVKN</sequence>
<keyword id="KW-0030">Aminoacyl-tRNA synthetase</keyword>
<keyword id="KW-0067">ATP-binding</keyword>
<keyword id="KW-0963">Cytoplasm</keyword>
<keyword id="KW-0436">Ligase</keyword>
<keyword id="KW-0547">Nucleotide-binding</keyword>
<keyword id="KW-0648">Protein biosynthesis</keyword>
<proteinExistence type="inferred from homology"/>
<reference key="1">
    <citation type="journal article" date="2015" name="Proc. Natl. Acad. Sci. U.S.A.">
        <title>Trichodesmium genome maintains abundant, widespread noncoding DNA in situ, despite oligotrophic lifestyle.</title>
        <authorList>
            <person name="Walworth N."/>
            <person name="Pfreundt U."/>
            <person name="Nelson W.C."/>
            <person name="Mincer T."/>
            <person name="Heidelberg J.F."/>
            <person name="Fu F."/>
            <person name="Waterbury J.B."/>
            <person name="Glavina del Rio T."/>
            <person name="Goodwin L."/>
            <person name="Kyrpides N.C."/>
            <person name="Land M.L."/>
            <person name="Woyke T."/>
            <person name="Hutchins D.A."/>
            <person name="Hess W.R."/>
            <person name="Webb E.A."/>
        </authorList>
    </citation>
    <scope>NUCLEOTIDE SEQUENCE [LARGE SCALE GENOMIC DNA]</scope>
    <source>
        <strain>IMS101</strain>
    </source>
</reference>
<protein>
    <recommendedName>
        <fullName evidence="1">Glycine--tRNA ligase beta subunit</fullName>
        <ecNumber evidence="1">6.1.1.14</ecNumber>
    </recommendedName>
    <alternativeName>
        <fullName evidence="1">Glycyl-tRNA synthetase beta subunit</fullName>
        <shortName evidence="1">GlyRS</shortName>
    </alternativeName>
</protein>
<evidence type="ECO:0000255" key="1">
    <source>
        <dbReference type="HAMAP-Rule" id="MF_00255"/>
    </source>
</evidence>
<evidence type="ECO:0000256" key="2">
    <source>
        <dbReference type="SAM" id="MobiDB-lite"/>
    </source>
</evidence>
<gene>
    <name evidence="1" type="primary">glyS</name>
    <name type="ordered locus">Tery_4481</name>
</gene>